<name>RNFE_YERPB</name>
<organism>
    <name type="scientific">Yersinia pseudotuberculosis serotype IB (strain PB1/+)</name>
    <dbReference type="NCBI Taxonomy" id="502801"/>
    <lineage>
        <taxon>Bacteria</taxon>
        <taxon>Pseudomonadati</taxon>
        <taxon>Pseudomonadota</taxon>
        <taxon>Gammaproteobacteria</taxon>
        <taxon>Enterobacterales</taxon>
        <taxon>Yersiniaceae</taxon>
        <taxon>Yersinia</taxon>
    </lineage>
</organism>
<dbReference type="EC" id="7.-.-.-" evidence="1"/>
<dbReference type="EMBL" id="CP001048">
    <property type="protein sequence ID" value="ACC89192.1"/>
    <property type="molecule type" value="Genomic_DNA"/>
</dbReference>
<dbReference type="RefSeq" id="WP_011192455.1">
    <property type="nucleotide sequence ID" value="NZ_CP009780.1"/>
</dbReference>
<dbReference type="SMR" id="B2K4J6"/>
<dbReference type="KEGG" id="ypb:YPTS_2231"/>
<dbReference type="PATRIC" id="fig|502801.10.peg.1623"/>
<dbReference type="GO" id="GO:0005886">
    <property type="term" value="C:plasma membrane"/>
    <property type="evidence" value="ECO:0007669"/>
    <property type="project" value="UniProtKB-SubCell"/>
</dbReference>
<dbReference type="GO" id="GO:0022900">
    <property type="term" value="P:electron transport chain"/>
    <property type="evidence" value="ECO:0007669"/>
    <property type="project" value="UniProtKB-UniRule"/>
</dbReference>
<dbReference type="HAMAP" id="MF_00478">
    <property type="entry name" value="RsxE_RnfE"/>
    <property type="match status" value="1"/>
</dbReference>
<dbReference type="InterPro" id="IPR003667">
    <property type="entry name" value="NqrDE/RnfAE"/>
</dbReference>
<dbReference type="InterPro" id="IPR010968">
    <property type="entry name" value="RnfE"/>
</dbReference>
<dbReference type="NCBIfam" id="NF009070">
    <property type="entry name" value="PRK12405.1"/>
    <property type="match status" value="1"/>
</dbReference>
<dbReference type="NCBIfam" id="TIGR01948">
    <property type="entry name" value="rnfE"/>
    <property type="match status" value="1"/>
</dbReference>
<dbReference type="PANTHER" id="PTHR30586">
    <property type="entry name" value="ELECTRON TRANSPORT COMPLEX PROTEIN RNFE"/>
    <property type="match status" value="1"/>
</dbReference>
<dbReference type="PANTHER" id="PTHR30586:SF0">
    <property type="entry name" value="ION-TRANSLOCATING OXIDOREDUCTASE COMPLEX SUBUNIT E"/>
    <property type="match status" value="1"/>
</dbReference>
<dbReference type="Pfam" id="PF02508">
    <property type="entry name" value="Rnf-Nqr"/>
    <property type="match status" value="1"/>
</dbReference>
<dbReference type="PIRSF" id="PIRSF006102">
    <property type="entry name" value="NQR_DE"/>
    <property type="match status" value="1"/>
</dbReference>
<protein>
    <recommendedName>
        <fullName evidence="1">Ion-translocating oxidoreductase complex subunit E</fullName>
        <ecNumber evidence="1">7.-.-.-</ecNumber>
    </recommendedName>
    <alternativeName>
        <fullName evidence="1">Rnf electron transport complex subunit E</fullName>
    </alternativeName>
</protein>
<gene>
    <name evidence="1" type="primary">rnfE</name>
    <name type="ordered locus">YPTS_2231</name>
</gene>
<proteinExistence type="inferred from homology"/>
<feature type="chain" id="PRO_1000125869" description="Ion-translocating oxidoreductase complex subunit E">
    <location>
        <begin position="1"/>
        <end position="233"/>
    </location>
</feature>
<feature type="transmembrane region" description="Helical" evidence="1">
    <location>
        <begin position="18"/>
        <end position="38"/>
    </location>
</feature>
<feature type="transmembrane region" description="Helical" evidence="1">
    <location>
        <begin position="39"/>
        <end position="59"/>
    </location>
</feature>
<feature type="transmembrane region" description="Helical" evidence="1">
    <location>
        <begin position="69"/>
        <end position="89"/>
    </location>
</feature>
<feature type="transmembrane region" description="Helical" evidence="1">
    <location>
        <begin position="92"/>
        <end position="112"/>
    </location>
</feature>
<feature type="transmembrane region" description="Helical" evidence="1">
    <location>
        <begin position="128"/>
        <end position="148"/>
    </location>
</feature>
<feature type="transmembrane region" description="Helical" evidence="1">
    <location>
        <begin position="182"/>
        <end position="202"/>
    </location>
</feature>
<keyword id="KW-0997">Cell inner membrane</keyword>
<keyword id="KW-1003">Cell membrane</keyword>
<keyword id="KW-0249">Electron transport</keyword>
<keyword id="KW-0472">Membrane</keyword>
<keyword id="KW-1278">Translocase</keyword>
<keyword id="KW-0812">Transmembrane</keyword>
<keyword id="KW-1133">Transmembrane helix</keyword>
<keyword id="KW-0813">Transport</keyword>
<comment type="function">
    <text evidence="1">Part of a membrane-bound complex that couples electron transfer with translocation of ions across the membrane.</text>
</comment>
<comment type="subunit">
    <text evidence="1">The complex is composed of six subunits: RnfA, RnfB, RnfC, RnfD, RnfE and RnfG.</text>
</comment>
<comment type="subcellular location">
    <subcellularLocation>
        <location evidence="1">Cell inner membrane</location>
        <topology evidence="1">Multi-pass membrane protein</topology>
    </subcellularLocation>
</comment>
<comment type="similarity">
    <text evidence="1">Belongs to the NqrDE/RnfAE family.</text>
</comment>
<accession>B2K4J6</accession>
<sequence>MSEAKKLLAQGLWKNNSALVQLLGLCPLLAVSSTATNALGLGLATTLVLVCTNTAVSALRRWVPSEIRIPIYVMIIASVVSTVQMLINAYAFGLYQSLGIFIPLIVTNCIVIGRAEAYAAKNPVGLSALDGFAMGMGATCALFVLGALREILGNGTLFDGADMLLGSWATVLRIDILHLDTPFLLAMLPPGAFIGLGLLLAGKYVIDEKMKARKANTRVNVPQLQDGDAEKAL</sequence>
<reference key="1">
    <citation type="submission" date="2008-04" db="EMBL/GenBank/DDBJ databases">
        <title>Complete sequence of Yersinia pseudotuberculosis PB1/+.</title>
        <authorList>
            <person name="Copeland A."/>
            <person name="Lucas S."/>
            <person name="Lapidus A."/>
            <person name="Glavina del Rio T."/>
            <person name="Dalin E."/>
            <person name="Tice H."/>
            <person name="Bruce D."/>
            <person name="Goodwin L."/>
            <person name="Pitluck S."/>
            <person name="Munk A.C."/>
            <person name="Brettin T."/>
            <person name="Detter J.C."/>
            <person name="Han C."/>
            <person name="Tapia R."/>
            <person name="Schmutz J."/>
            <person name="Larimer F."/>
            <person name="Land M."/>
            <person name="Hauser L."/>
            <person name="Challacombe J.F."/>
            <person name="Green L."/>
            <person name="Lindler L.E."/>
            <person name="Nikolich M.P."/>
            <person name="Richardson P."/>
        </authorList>
    </citation>
    <scope>NUCLEOTIDE SEQUENCE [LARGE SCALE GENOMIC DNA]</scope>
    <source>
        <strain>PB1/+</strain>
    </source>
</reference>
<evidence type="ECO:0000255" key="1">
    <source>
        <dbReference type="HAMAP-Rule" id="MF_00478"/>
    </source>
</evidence>